<name>HEMH_NEIMF</name>
<proteinExistence type="inferred from homology"/>
<gene>
    <name evidence="1" type="primary">hemH</name>
    <name type="ordered locus">NMC0669</name>
</gene>
<feature type="chain" id="PRO_1000019329" description="Ferrochelatase">
    <location>
        <begin position="1"/>
        <end position="336"/>
    </location>
</feature>
<feature type="binding site" evidence="1">
    <location>
        <position position="206"/>
    </location>
    <ligand>
        <name>Fe cation</name>
        <dbReference type="ChEBI" id="CHEBI:24875"/>
    </ligand>
</feature>
<feature type="binding site" evidence="1">
    <location>
        <position position="287"/>
    </location>
    <ligand>
        <name>Fe cation</name>
        <dbReference type="ChEBI" id="CHEBI:24875"/>
    </ligand>
</feature>
<dbReference type="EC" id="4.98.1.1" evidence="1"/>
<dbReference type="EMBL" id="AM421808">
    <property type="protein sequence ID" value="CAM09961.1"/>
    <property type="molecule type" value="Genomic_DNA"/>
</dbReference>
<dbReference type="SMR" id="A1KSY0"/>
<dbReference type="KEGG" id="nmc:NMC0669"/>
<dbReference type="HOGENOM" id="CLU_018884_0_0_4"/>
<dbReference type="UniPathway" id="UPA00252">
    <property type="reaction ID" value="UER00325"/>
</dbReference>
<dbReference type="Proteomes" id="UP000002286">
    <property type="component" value="Chromosome"/>
</dbReference>
<dbReference type="GO" id="GO:0005737">
    <property type="term" value="C:cytoplasm"/>
    <property type="evidence" value="ECO:0007669"/>
    <property type="project" value="UniProtKB-SubCell"/>
</dbReference>
<dbReference type="GO" id="GO:0004325">
    <property type="term" value="F:ferrochelatase activity"/>
    <property type="evidence" value="ECO:0007669"/>
    <property type="project" value="UniProtKB-UniRule"/>
</dbReference>
<dbReference type="GO" id="GO:0046872">
    <property type="term" value="F:metal ion binding"/>
    <property type="evidence" value="ECO:0007669"/>
    <property type="project" value="UniProtKB-KW"/>
</dbReference>
<dbReference type="GO" id="GO:0006783">
    <property type="term" value="P:heme biosynthetic process"/>
    <property type="evidence" value="ECO:0007669"/>
    <property type="project" value="UniProtKB-UniRule"/>
</dbReference>
<dbReference type="CDD" id="cd00419">
    <property type="entry name" value="Ferrochelatase_C"/>
    <property type="match status" value="1"/>
</dbReference>
<dbReference type="CDD" id="cd03411">
    <property type="entry name" value="Ferrochelatase_N"/>
    <property type="match status" value="1"/>
</dbReference>
<dbReference type="FunFam" id="3.40.50.1400:FF:000002">
    <property type="entry name" value="Ferrochelatase"/>
    <property type="match status" value="1"/>
</dbReference>
<dbReference type="Gene3D" id="3.40.50.1400">
    <property type="match status" value="2"/>
</dbReference>
<dbReference type="HAMAP" id="MF_00323">
    <property type="entry name" value="Ferrochelatase"/>
    <property type="match status" value="1"/>
</dbReference>
<dbReference type="InterPro" id="IPR001015">
    <property type="entry name" value="Ferrochelatase"/>
</dbReference>
<dbReference type="InterPro" id="IPR019772">
    <property type="entry name" value="Ferrochelatase_AS"/>
</dbReference>
<dbReference type="InterPro" id="IPR033644">
    <property type="entry name" value="Ferrochelatase_C"/>
</dbReference>
<dbReference type="InterPro" id="IPR033659">
    <property type="entry name" value="Ferrochelatase_N"/>
</dbReference>
<dbReference type="NCBIfam" id="TIGR00109">
    <property type="entry name" value="hemH"/>
    <property type="match status" value="1"/>
</dbReference>
<dbReference type="PANTHER" id="PTHR11108">
    <property type="entry name" value="FERROCHELATASE"/>
    <property type="match status" value="1"/>
</dbReference>
<dbReference type="PANTHER" id="PTHR11108:SF1">
    <property type="entry name" value="FERROCHELATASE, MITOCHONDRIAL"/>
    <property type="match status" value="1"/>
</dbReference>
<dbReference type="Pfam" id="PF00762">
    <property type="entry name" value="Ferrochelatase"/>
    <property type="match status" value="1"/>
</dbReference>
<dbReference type="SUPFAM" id="SSF53800">
    <property type="entry name" value="Chelatase"/>
    <property type="match status" value="1"/>
</dbReference>
<dbReference type="PROSITE" id="PS00534">
    <property type="entry name" value="FERROCHELATASE"/>
    <property type="match status" value="1"/>
</dbReference>
<accession>A1KSY0</accession>
<protein>
    <recommendedName>
        <fullName evidence="1">Ferrochelatase</fullName>
        <ecNumber evidence="1">4.98.1.1</ecNumber>
    </recommendedName>
    <alternativeName>
        <fullName evidence="1">Heme synthase</fullName>
    </alternativeName>
    <alternativeName>
        <fullName evidence="1">Protoheme ferro-lyase</fullName>
    </alternativeName>
</protein>
<comment type="function">
    <text evidence="1">Catalyzes the ferrous insertion into protoporphyrin IX.</text>
</comment>
<comment type="catalytic activity">
    <reaction evidence="1">
        <text>heme b + 2 H(+) = protoporphyrin IX + Fe(2+)</text>
        <dbReference type="Rhea" id="RHEA:22584"/>
        <dbReference type="ChEBI" id="CHEBI:15378"/>
        <dbReference type="ChEBI" id="CHEBI:29033"/>
        <dbReference type="ChEBI" id="CHEBI:57306"/>
        <dbReference type="ChEBI" id="CHEBI:60344"/>
        <dbReference type="EC" id="4.98.1.1"/>
    </reaction>
</comment>
<comment type="pathway">
    <text evidence="1">Porphyrin-containing compound metabolism; protoheme biosynthesis; protoheme from protoporphyrin-IX: step 1/1.</text>
</comment>
<comment type="subcellular location">
    <subcellularLocation>
        <location evidence="1">Cytoplasm</location>
    </subcellularLocation>
</comment>
<comment type="similarity">
    <text evidence="1">Belongs to the ferrochelatase family.</text>
</comment>
<organism>
    <name type="scientific">Neisseria meningitidis serogroup C / serotype 2a (strain ATCC 700532 / DSM 15464 / FAM18)</name>
    <dbReference type="NCBI Taxonomy" id="272831"/>
    <lineage>
        <taxon>Bacteria</taxon>
        <taxon>Pseudomonadati</taxon>
        <taxon>Pseudomonadota</taxon>
        <taxon>Betaproteobacteria</taxon>
        <taxon>Neisseriales</taxon>
        <taxon>Neisseriaceae</taxon>
        <taxon>Neisseria</taxon>
    </lineage>
</organism>
<reference key="1">
    <citation type="journal article" date="2007" name="PLoS Genet.">
        <title>Meningococcal genetic variation mechanisms viewed through comparative analysis of serogroup C strain FAM18.</title>
        <authorList>
            <person name="Bentley S.D."/>
            <person name="Vernikos G.S."/>
            <person name="Snyder L.A.S."/>
            <person name="Churcher C."/>
            <person name="Arrowsmith C."/>
            <person name="Chillingworth T."/>
            <person name="Cronin A."/>
            <person name="Davis P.H."/>
            <person name="Holroyd N.E."/>
            <person name="Jagels K."/>
            <person name="Maddison M."/>
            <person name="Moule S."/>
            <person name="Rabbinowitsch E."/>
            <person name="Sharp S."/>
            <person name="Unwin L."/>
            <person name="Whitehead S."/>
            <person name="Quail M.A."/>
            <person name="Achtman M."/>
            <person name="Barrell B.G."/>
            <person name="Saunders N.J."/>
            <person name="Parkhill J."/>
        </authorList>
    </citation>
    <scope>NUCLEOTIDE SEQUENCE [LARGE SCALE GENOMIC DNA]</scope>
    <source>
        <strain>ATCC 700532 / DSM 15464 / FAM18</strain>
    </source>
</reference>
<sequence>MLPFFPEPSLSYTQQNRTAVLLLNLGTPDAPTAQAVRPYLKSFLTDRRVVELPKWLWYPILHGLVLTLRPKKSAHAYEKIWFKEGSPLEVYTARQAAALAKRMPDLIVRHAMTYGNPSVADVLSELKAQGAGRLLVIPMYPQYAASSSGAAVDKVCEQLLLQRNQMSVRTVSRFYDDTGYIDAMKNHILRYWAEHGRGKKLMLSFHGVPQKHHDLGDPYPDECRHTAKLLAEALELTEDQYVVSFQSQFGRAKWVTPSTQDLFGKLPKQGVTELDVFCPGFLADCLETMEEIALMGREQFYEAGGKSYRYIPCLNDNPDWIDALVALAEENLGGWR</sequence>
<keyword id="KW-0963">Cytoplasm</keyword>
<keyword id="KW-0350">Heme biosynthesis</keyword>
<keyword id="KW-0408">Iron</keyword>
<keyword id="KW-0456">Lyase</keyword>
<keyword id="KW-0479">Metal-binding</keyword>
<keyword id="KW-0627">Porphyrin biosynthesis</keyword>
<evidence type="ECO:0000255" key="1">
    <source>
        <dbReference type="HAMAP-Rule" id="MF_00323"/>
    </source>
</evidence>